<protein>
    <recommendedName>
        <fullName>ATP-dependent RNA helicase DBP5</fullName>
        <ecNumber>3.6.4.13</ecNumber>
    </recommendedName>
</protein>
<proteinExistence type="inferred from homology"/>
<dbReference type="EC" id="3.6.4.13"/>
<dbReference type="EMBL" id="CP017625">
    <property type="protein sequence ID" value="AOW28226.1"/>
    <property type="molecule type" value="Genomic_DNA"/>
</dbReference>
<dbReference type="RefSeq" id="XP_721738.2">
    <property type="nucleotide sequence ID" value="XM_716645.2"/>
</dbReference>
<dbReference type="SMR" id="Q5AJD0"/>
<dbReference type="BioGRID" id="1219658">
    <property type="interactions" value="4"/>
</dbReference>
<dbReference type="FunCoup" id="Q5AJD0">
    <property type="interactions" value="817"/>
</dbReference>
<dbReference type="STRING" id="237561.Q5AJD0"/>
<dbReference type="EnsemblFungi" id="C3_01860C_A-T">
    <property type="protein sequence ID" value="C3_01860C_A-T-p1"/>
    <property type="gene ID" value="C3_01860C_A"/>
</dbReference>
<dbReference type="GeneID" id="3636564"/>
<dbReference type="KEGG" id="cal:CAALFM_C301860CA"/>
<dbReference type="CGD" id="CAL0000188126">
    <property type="gene designation" value="DBP5"/>
</dbReference>
<dbReference type="VEuPathDB" id="FungiDB:C3_01860C_A"/>
<dbReference type="eggNOG" id="KOG0332">
    <property type="taxonomic scope" value="Eukaryota"/>
</dbReference>
<dbReference type="HOGENOM" id="CLU_003041_1_0_1"/>
<dbReference type="InParanoid" id="Q5AJD0"/>
<dbReference type="OrthoDB" id="10265785at2759"/>
<dbReference type="PRO" id="PR:Q5AJD0"/>
<dbReference type="Proteomes" id="UP000000559">
    <property type="component" value="Chromosome 3"/>
</dbReference>
<dbReference type="GO" id="GO:0005934">
    <property type="term" value="C:cellular bud tip"/>
    <property type="evidence" value="ECO:0007669"/>
    <property type="project" value="EnsemblFungi"/>
</dbReference>
<dbReference type="GO" id="GO:0010494">
    <property type="term" value="C:cytoplasmic stress granule"/>
    <property type="evidence" value="ECO:0000318"/>
    <property type="project" value="GO_Central"/>
</dbReference>
<dbReference type="GO" id="GO:0031965">
    <property type="term" value="C:nuclear membrane"/>
    <property type="evidence" value="ECO:0007669"/>
    <property type="project" value="UniProtKB-SubCell"/>
</dbReference>
<dbReference type="GO" id="GO:0044614">
    <property type="term" value="C:nuclear pore cytoplasmic filaments"/>
    <property type="evidence" value="ECO:0007669"/>
    <property type="project" value="EnsemblFungi"/>
</dbReference>
<dbReference type="GO" id="GO:0005634">
    <property type="term" value="C:nucleus"/>
    <property type="evidence" value="ECO:0000318"/>
    <property type="project" value="GO_Central"/>
</dbReference>
<dbReference type="GO" id="GO:0005524">
    <property type="term" value="F:ATP binding"/>
    <property type="evidence" value="ECO:0007669"/>
    <property type="project" value="UniProtKB-KW"/>
</dbReference>
<dbReference type="GO" id="GO:0016887">
    <property type="term" value="F:ATP hydrolysis activity"/>
    <property type="evidence" value="ECO:0007669"/>
    <property type="project" value="RHEA"/>
</dbReference>
<dbReference type="GO" id="GO:0000822">
    <property type="term" value="F:inositol hexakisphosphate binding"/>
    <property type="evidence" value="ECO:0007669"/>
    <property type="project" value="EnsemblFungi"/>
</dbReference>
<dbReference type="GO" id="GO:0003729">
    <property type="term" value="F:mRNA binding"/>
    <property type="evidence" value="ECO:0000318"/>
    <property type="project" value="GO_Central"/>
</dbReference>
<dbReference type="GO" id="GO:0003724">
    <property type="term" value="F:RNA helicase activity"/>
    <property type="evidence" value="ECO:0000318"/>
    <property type="project" value="GO_Central"/>
</dbReference>
<dbReference type="GO" id="GO:0016973">
    <property type="term" value="P:poly(A)+ mRNA export from nucleus"/>
    <property type="evidence" value="ECO:0000318"/>
    <property type="project" value="GO_Central"/>
</dbReference>
<dbReference type="GO" id="GO:0015031">
    <property type="term" value="P:protein transport"/>
    <property type="evidence" value="ECO:0007669"/>
    <property type="project" value="UniProtKB-KW"/>
</dbReference>
<dbReference type="GO" id="GO:0006415">
    <property type="term" value="P:translational termination"/>
    <property type="evidence" value="ECO:0007669"/>
    <property type="project" value="EnsemblFungi"/>
</dbReference>
<dbReference type="GO" id="GO:0006409">
    <property type="term" value="P:tRNA export from nucleus"/>
    <property type="evidence" value="ECO:0007669"/>
    <property type="project" value="EnsemblFungi"/>
</dbReference>
<dbReference type="CDD" id="cd17963">
    <property type="entry name" value="DEADc_DDX19_DDX25"/>
    <property type="match status" value="1"/>
</dbReference>
<dbReference type="CDD" id="cd18787">
    <property type="entry name" value="SF2_C_DEAD"/>
    <property type="match status" value="1"/>
</dbReference>
<dbReference type="FunFam" id="3.40.50.300:FF:000849">
    <property type="entry name" value="ATP-dependent RNA helicase DBP5"/>
    <property type="match status" value="1"/>
</dbReference>
<dbReference type="FunFam" id="3.40.50.300:FF:000318">
    <property type="entry name" value="ATP-dependent RNA helicase DDX19B"/>
    <property type="match status" value="1"/>
</dbReference>
<dbReference type="Gene3D" id="3.40.50.300">
    <property type="entry name" value="P-loop containing nucleotide triphosphate hydrolases"/>
    <property type="match status" value="2"/>
</dbReference>
<dbReference type="InterPro" id="IPR011545">
    <property type="entry name" value="DEAD/DEAH_box_helicase_dom"/>
</dbReference>
<dbReference type="InterPro" id="IPR014001">
    <property type="entry name" value="Helicase_ATP-bd"/>
</dbReference>
<dbReference type="InterPro" id="IPR001650">
    <property type="entry name" value="Helicase_C-like"/>
</dbReference>
<dbReference type="InterPro" id="IPR027417">
    <property type="entry name" value="P-loop_NTPase"/>
</dbReference>
<dbReference type="InterPro" id="IPR000629">
    <property type="entry name" value="RNA-helicase_DEAD-box_CS"/>
</dbReference>
<dbReference type="InterPro" id="IPR014014">
    <property type="entry name" value="RNA_helicase_DEAD_Q_motif"/>
</dbReference>
<dbReference type="PANTHER" id="PTHR47958">
    <property type="entry name" value="ATP-DEPENDENT RNA HELICASE DBP3"/>
    <property type="match status" value="1"/>
</dbReference>
<dbReference type="Pfam" id="PF00270">
    <property type="entry name" value="DEAD"/>
    <property type="match status" value="1"/>
</dbReference>
<dbReference type="Pfam" id="PF00271">
    <property type="entry name" value="Helicase_C"/>
    <property type="match status" value="1"/>
</dbReference>
<dbReference type="SMART" id="SM00487">
    <property type="entry name" value="DEXDc"/>
    <property type="match status" value="1"/>
</dbReference>
<dbReference type="SMART" id="SM00490">
    <property type="entry name" value="HELICc"/>
    <property type="match status" value="1"/>
</dbReference>
<dbReference type="SUPFAM" id="SSF52540">
    <property type="entry name" value="P-loop containing nucleoside triphosphate hydrolases"/>
    <property type="match status" value="1"/>
</dbReference>
<dbReference type="PROSITE" id="PS00039">
    <property type="entry name" value="DEAD_ATP_HELICASE"/>
    <property type="match status" value="1"/>
</dbReference>
<dbReference type="PROSITE" id="PS51192">
    <property type="entry name" value="HELICASE_ATP_BIND_1"/>
    <property type="match status" value="1"/>
</dbReference>
<dbReference type="PROSITE" id="PS51194">
    <property type="entry name" value="HELICASE_CTER"/>
    <property type="match status" value="1"/>
</dbReference>
<dbReference type="PROSITE" id="PS51195">
    <property type="entry name" value="Q_MOTIF"/>
    <property type="match status" value="1"/>
</dbReference>
<organism>
    <name type="scientific">Candida albicans (strain SC5314 / ATCC MYA-2876)</name>
    <name type="common">Yeast</name>
    <dbReference type="NCBI Taxonomy" id="237561"/>
    <lineage>
        <taxon>Eukaryota</taxon>
        <taxon>Fungi</taxon>
        <taxon>Dikarya</taxon>
        <taxon>Ascomycota</taxon>
        <taxon>Saccharomycotina</taxon>
        <taxon>Pichiomycetes</taxon>
        <taxon>Debaryomycetaceae</taxon>
        <taxon>Candida/Lodderomyces clade</taxon>
        <taxon>Candida</taxon>
    </lineage>
</organism>
<name>DBP5_CANAL</name>
<gene>
    <name type="primary">DBP5</name>
    <name type="ordered locus">CAALFM_C301860CA</name>
    <name type="ORF">CaO19.1661</name>
    <name type="ORF">CaO19.9230</name>
</gene>
<evidence type="ECO:0000250" key="1"/>
<evidence type="ECO:0000255" key="2">
    <source>
        <dbReference type="PROSITE-ProRule" id="PRU00541"/>
    </source>
</evidence>
<evidence type="ECO:0000255" key="3">
    <source>
        <dbReference type="PROSITE-ProRule" id="PRU00542"/>
    </source>
</evidence>
<evidence type="ECO:0000256" key="4">
    <source>
        <dbReference type="SAM" id="MobiDB-lite"/>
    </source>
</evidence>
<evidence type="ECO:0000305" key="5"/>
<sequence>MSSEKVKRVEADATDLLASLSIDKSGEKLEEIKKGSTPDPSDLLGGLSLKEGDSKKPEEKKEVVEEPENKEINDDKKDEDKKDESKDEVKDGDGAKEETKEEVKEESKEEPKEPKEPKEPATNLIKSSYEVKVKLADIQADPNSPLYSVKSFEELGLSPELLKGLYAMKFNKPSKIQEKALPLLLSNPPRNMIGQSQSGTGKTAAFSLTMLSRVDPTIKMPQCLCLSPTRELARQTLEVITTMGKFTNITTQLVVPNAIPRGSSVNAQVLVGTPGIAIDLIRRRQLNLSKMKVFVLDEADNMLEAQGLGDQAIRVKKALPRGVQLVLFSATFPTEVREYAERLVPDANSLELKQEELNVDGIKQLYMDCRSEQHKFEVLCELYGLLTIGSSIIFVEKKETADVLYGKMKKEGHTVSVLHGGLDNTDRDRLIDDFREGRSKVLITTNVLARGIDIASVSMVVNYDMPTDKYGKPDPSTYLHRIGRTGRFGRVGVSISFIHDRRSYDILMAIKAYFGNVEMTRVPTDDWDEVEKIVKKVIKS</sequence>
<comment type="function">
    <text evidence="1">ATP-dependent RNA helicase associated with the nuclear pore complex and essential for mRNA export from the nucleus. May participate in a terminal step of mRNA export through the removal of proteins that accompany mRNA through the nucleopore complex. May also be involved in early transcription (By similarity).</text>
</comment>
<comment type="catalytic activity">
    <reaction>
        <text>ATP + H2O = ADP + phosphate + H(+)</text>
        <dbReference type="Rhea" id="RHEA:13065"/>
        <dbReference type="ChEBI" id="CHEBI:15377"/>
        <dbReference type="ChEBI" id="CHEBI:15378"/>
        <dbReference type="ChEBI" id="CHEBI:30616"/>
        <dbReference type="ChEBI" id="CHEBI:43474"/>
        <dbReference type="ChEBI" id="CHEBI:456216"/>
        <dbReference type="EC" id="3.6.4.13"/>
    </reaction>
</comment>
<comment type="subunit">
    <text evidence="1">Associates with the nuclear pore complex.</text>
</comment>
<comment type="subcellular location">
    <subcellularLocation>
        <location evidence="1">Cytoplasm</location>
    </subcellularLocation>
    <subcellularLocation>
        <location>Nucleus</location>
        <location>Nuclear pore complex</location>
    </subcellularLocation>
    <subcellularLocation>
        <location evidence="1">Nucleus membrane</location>
        <topology evidence="1">Peripheral membrane protein</topology>
        <orientation evidence="1">Cytoplasmic side</orientation>
    </subcellularLocation>
    <text evidence="1">Nuclear pore complex cytoplasmic fibrils.</text>
</comment>
<comment type="domain">
    <text>The Q motif is unique to and characteristic of the DEAD box family of RNA helicases and controls ATP binding and hydrolysis.</text>
</comment>
<comment type="similarity">
    <text evidence="5">Belongs to the DEAD box helicase family. DDX19/DBP5 subfamily.</text>
</comment>
<keyword id="KW-0067">ATP-binding</keyword>
<keyword id="KW-0963">Cytoplasm</keyword>
<keyword id="KW-0347">Helicase</keyword>
<keyword id="KW-0378">Hydrolase</keyword>
<keyword id="KW-0472">Membrane</keyword>
<keyword id="KW-0509">mRNA transport</keyword>
<keyword id="KW-0906">Nuclear pore complex</keyword>
<keyword id="KW-0547">Nucleotide-binding</keyword>
<keyword id="KW-0539">Nucleus</keyword>
<keyword id="KW-0653">Protein transport</keyword>
<keyword id="KW-1185">Reference proteome</keyword>
<keyword id="KW-0694">RNA-binding</keyword>
<keyword id="KW-0811">Translocation</keyword>
<keyword id="KW-0813">Transport</keyword>
<feature type="chain" id="PRO_0000232219" description="ATP-dependent RNA helicase DBP5">
    <location>
        <begin position="1"/>
        <end position="540"/>
    </location>
</feature>
<feature type="domain" description="Helicase ATP-binding" evidence="2">
    <location>
        <begin position="183"/>
        <end position="350"/>
    </location>
</feature>
<feature type="domain" description="Helicase C-terminal" evidence="3">
    <location>
        <begin position="361"/>
        <end position="538"/>
    </location>
</feature>
<feature type="region of interest" description="Disordered" evidence="4">
    <location>
        <begin position="24"/>
        <end position="124"/>
    </location>
</feature>
<feature type="short sequence motif" description="Q motif">
    <location>
        <begin position="150"/>
        <end position="178"/>
    </location>
</feature>
<feature type="short sequence motif" description="DEAD box">
    <location>
        <begin position="297"/>
        <end position="300"/>
    </location>
</feature>
<feature type="compositionally biased region" description="Basic and acidic residues" evidence="4">
    <location>
        <begin position="24"/>
        <end position="36"/>
    </location>
</feature>
<feature type="compositionally biased region" description="Basic and acidic residues" evidence="4">
    <location>
        <begin position="50"/>
        <end position="119"/>
    </location>
</feature>
<feature type="binding site" evidence="2">
    <location>
        <begin position="196"/>
        <end position="203"/>
    </location>
    <ligand>
        <name>ATP</name>
        <dbReference type="ChEBI" id="CHEBI:30616"/>
    </ligand>
</feature>
<reference key="1">
    <citation type="journal article" date="2004" name="Proc. Natl. Acad. Sci. U.S.A.">
        <title>The diploid genome sequence of Candida albicans.</title>
        <authorList>
            <person name="Jones T."/>
            <person name="Federspiel N.A."/>
            <person name="Chibana H."/>
            <person name="Dungan J."/>
            <person name="Kalman S."/>
            <person name="Magee B.B."/>
            <person name="Newport G."/>
            <person name="Thorstenson Y.R."/>
            <person name="Agabian N."/>
            <person name="Magee P.T."/>
            <person name="Davis R.W."/>
            <person name="Scherer S."/>
        </authorList>
    </citation>
    <scope>NUCLEOTIDE SEQUENCE [LARGE SCALE GENOMIC DNA]</scope>
    <source>
        <strain>SC5314 / ATCC MYA-2876</strain>
    </source>
</reference>
<reference key="2">
    <citation type="journal article" date="2007" name="Genome Biol.">
        <title>Assembly of the Candida albicans genome into sixteen supercontigs aligned on the eight chromosomes.</title>
        <authorList>
            <person name="van het Hoog M."/>
            <person name="Rast T.J."/>
            <person name="Martchenko M."/>
            <person name="Grindle S."/>
            <person name="Dignard D."/>
            <person name="Hogues H."/>
            <person name="Cuomo C."/>
            <person name="Berriman M."/>
            <person name="Scherer S."/>
            <person name="Magee B.B."/>
            <person name="Whiteway M."/>
            <person name="Chibana H."/>
            <person name="Nantel A."/>
            <person name="Magee P.T."/>
        </authorList>
    </citation>
    <scope>GENOME REANNOTATION</scope>
    <source>
        <strain>SC5314 / ATCC MYA-2876</strain>
    </source>
</reference>
<reference key="3">
    <citation type="journal article" date="2013" name="Genome Biol.">
        <title>Assembly of a phased diploid Candida albicans genome facilitates allele-specific measurements and provides a simple model for repeat and indel structure.</title>
        <authorList>
            <person name="Muzzey D."/>
            <person name="Schwartz K."/>
            <person name="Weissman J.S."/>
            <person name="Sherlock G."/>
        </authorList>
    </citation>
    <scope>NUCLEOTIDE SEQUENCE [LARGE SCALE GENOMIC DNA]</scope>
    <scope>GENOME REANNOTATION</scope>
    <source>
        <strain>SC5314 / ATCC MYA-2876</strain>
    </source>
</reference>
<accession>Q5AJD0</accession>
<accession>A0A1D8PJB3</accession>